<reference key="1">
    <citation type="journal article" date="2001" name="Proc. Natl. Acad. Sci. U.S.A.">
        <title>Complete genome sequence of an M1 strain of Streptococcus pyogenes.</title>
        <authorList>
            <person name="Ferretti J.J."/>
            <person name="McShan W.M."/>
            <person name="Ajdic D.J."/>
            <person name="Savic D.J."/>
            <person name="Savic G."/>
            <person name="Lyon K."/>
            <person name="Primeaux C."/>
            <person name="Sezate S."/>
            <person name="Suvorov A.N."/>
            <person name="Kenton S."/>
            <person name="Lai H.S."/>
            <person name="Lin S.P."/>
            <person name="Qian Y."/>
            <person name="Jia H.G."/>
            <person name="Najar F.Z."/>
            <person name="Ren Q."/>
            <person name="Zhu H."/>
            <person name="Song L."/>
            <person name="White J."/>
            <person name="Yuan X."/>
            <person name="Clifton S.W."/>
            <person name="Roe B.A."/>
            <person name="McLaughlin R.E."/>
        </authorList>
    </citation>
    <scope>NUCLEOTIDE SEQUENCE [LARGE SCALE GENOMIC DNA]</scope>
    <source>
        <strain>ATCC 700294 / SF370 / Serotype M1</strain>
    </source>
</reference>
<reference key="2">
    <citation type="journal article" date="2005" name="J. Infect. Dis.">
        <title>Evolutionary origin and emergence of a highly successful clone of serotype M1 group A Streptococcus involved multiple horizontal gene transfer events.</title>
        <authorList>
            <person name="Sumby P."/>
            <person name="Porcella S.F."/>
            <person name="Madrigal A.G."/>
            <person name="Barbian K.D."/>
            <person name="Virtaneva K."/>
            <person name="Ricklefs S.M."/>
            <person name="Sturdevant D.E."/>
            <person name="Graham M.R."/>
            <person name="Vuopio-Varkila J."/>
            <person name="Hoe N.P."/>
            <person name="Musser J.M."/>
        </authorList>
    </citation>
    <scope>NUCLEOTIDE SEQUENCE [LARGE SCALE GENOMIC DNA]</scope>
    <source>
        <strain>ATCC BAA-947 / MGAS5005 / Serotype M1</strain>
    </source>
</reference>
<organism>
    <name type="scientific">Streptococcus pyogenes serotype M1</name>
    <dbReference type="NCBI Taxonomy" id="301447"/>
    <lineage>
        <taxon>Bacteria</taxon>
        <taxon>Bacillati</taxon>
        <taxon>Bacillota</taxon>
        <taxon>Bacilli</taxon>
        <taxon>Lactobacillales</taxon>
        <taxon>Streptococcaceae</taxon>
        <taxon>Streptococcus</taxon>
    </lineage>
</organism>
<dbReference type="EMBL" id="AE004092">
    <property type="protein sequence ID" value="AAK34157.1"/>
    <property type="molecule type" value="Genomic_DNA"/>
</dbReference>
<dbReference type="EMBL" id="CP000017">
    <property type="protein sequence ID" value="AAZ51693.1"/>
    <property type="molecule type" value="Genomic_DNA"/>
</dbReference>
<dbReference type="RefSeq" id="NP_269436.1">
    <property type="nucleotide sequence ID" value="NC_002737.2"/>
</dbReference>
<dbReference type="SMR" id="Q99ZA5"/>
<dbReference type="PaxDb" id="1314-HKU360_01054"/>
<dbReference type="KEGG" id="spy:SPy_1314"/>
<dbReference type="KEGG" id="spz:M5005_Spy1075"/>
<dbReference type="PATRIC" id="fig|160490.10.peg.1151"/>
<dbReference type="HOGENOM" id="CLU_009621_2_1_9"/>
<dbReference type="OMA" id="RYMHSEI"/>
<dbReference type="Proteomes" id="UP000000750">
    <property type="component" value="Chromosome"/>
</dbReference>
<dbReference type="GO" id="GO:0005737">
    <property type="term" value="C:cytoplasm"/>
    <property type="evidence" value="ECO:0007669"/>
    <property type="project" value="UniProtKB-SubCell"/>
</dbReference>
<dbReference type="GO" id="GO:0009380">
    <property type="term" value="C:excinuclease repair complex"/>
    <property type="evidence" value="ECO:0007669"/>
    <property type="project" value="InterPro"/>
</dbReference>
<dbReference type="GO" id="GO:0005524">
    <property type="term" value="F:ATP binding"/>
    <property type="evidence" value="ECO:0007669"/>
    <property type="project" value="UniProtKB-UniRule"/>
</dbReference>
<dbReference type="GO" id="GO:0016887">
    <property type="term" value="F:ATP hydrolysis activity"/>
    <property type="evidence" value="ECO:0007669"/>
    <property type="project" value="InterPro"/>
</dbReference>
<dbReference type="GO" id="GO:0003677">
    <property type="term" value="F:DNA binding"/>
    <property type="evidence" value="ECO:0007669"/>
    <property type="project" value="UniProtKB-UniRule"/>
</dbReference>
<dbReference type="GO" id="GO:0009381">
    <property type="term" value="F:excinuclease ABC activity"/>
    <property type="evidence" value="ECO:0007669"/>
    <property type="project" value="UniProtKB-UniRule"/>
</dbReference>
<dbReference type="GO" id="GO:0006289">
    <property type="term" value="P:nucleotide-excision repair"/>
    <property type="evidence" value="ECO:0007669"/>
    <property type="project" value="UniProtKB-UniRule"/>
</dbReference>
<dbReference type="GO" id="GO:0009432">
    <property type="term" value="P:SOS response"/>
    <property type="evidence" value="ECO:0007669"/>
    <property type="project" value="UniProtKB-UniRule"/>
</dbReference>
<dbReference type="CDD" id="cd17916">
    <property type="entry name" value="DEXHc_UvrB"/>
    <property type="match status" value="1"/>
</dbReference>
<dbReference type="CDD" id="cd18790">
    <property type="entry name" value="SF2_C_UvrB"/>
    <property type="match status" value="1"/>
</dbReference>
<dbReference type="Gene3D" id="3.40.50.300">
    <property type="entry name" value="P-loop containing nucleotide triphosphate hydrolases"/>
    <property type="match status" value="3"/>
</dbReference>
<dbReference type="Gene3D" id="4.10.860.10">
    <property type="entry name" value="UVR domain"/>
    <property type="match status" value="1"/>
</dbReference>
<dbReference type="HAMAP" id="MF_00204">
    <property type="entry name" value="UvrB"/>
    <property type="match status" value="1"/>
</dbReference>
<dbReference type="InterPro" id="IPR006935">
    <property type="entry name" value="Helicase/UvrB_N"/>
</dbReference>
<dbReference type="InterPro" id="IPR014001">
    <property type="entry name" value="Helicase_ATP-bd"/>
</dbReference>
<dbReference type="InterPro" id="IPR001650">
    <property type="entry name" value="Helicase_C-like"/>
</dbReference>
<dbReference type="InterPro" id="IPR027417">
    <property type="entry name" value="P-loop_NTPase"/>
</dbReference>
<dbReference type="InterPro" id="IPR001943">
    <property type="entry name" value="UVR_dom"/>
</dbReference>
<dbReference type="InterPro" id="IPR036876">
    <property type="entry name" value="UVR_dom_sf"/>
</dbReference>
<dbReference type="InterPro" id="IPR004807">
    <property type="entry name" value="UvrB"/>
</dbReference>
<dbReference type="InterPro" id="IPR041471">
    <property type="entry name" value="UvrB_inter"/>
</dbReference>
<dbReference type="InterPro" id="IPR024759">
    <property type="entry name" value="UvrB_YAD/RRR_dom"/>
</dbReference>
<dbReference type="NCBIfam" id="NF003673">
    <property type="entry name" value="PRK05298.1"/>
    <property type="match status" value="1"/>
</dbReference>
<dbReference type="NCBIfam" id="TIGR00631">
    <property type="entry name" value="uvrb"/>
    <property type="match status" value="1"/>
</dbReference>
<dbReference type="PANTHER" id="PTHR24029">
    <property type="entry name" value="UVRABC SYSTEM PROTEIN B"/>
    <property type="match status" value="1"/>
</dbReference>
<dbReference type="PANTHER" id="PTHR24029:SF0">
    <property type="entry name" value="UVRABC SYSTEM PROTEIN B"/>
    <property type="match status" value="1"/>
</dbReference>
<dbReference type="Pfam" id="PF00271">
    <property type="entry name" value="Helicase_C"/>
    <property type="match status" value="1"/>
</dbReference>
<dbReference type="Pfam" id="PF04851">
    <property type="entry name" value="ResIII"/>
    <property type="match status" value="1"/>
</dbReference>
<dbReference type="Pfam" id="PF02151">
    <property type="entry name" value="UVR"/>
    <property type="match status" value="1"/>
</dbReference>
<dbReference type="Pfam" id="PF12344">
    <property type="entry name" value="UvrB"/>
    <property type="match status" value="1"/>
</dbReference>
<dbReference type="Pfam" id="PF17757">
    <property type="entry name" value="UvrB_inter"/>
    <property type="match status" value="1"/>
</dbReference>
<dbReference type="SMART" id="SM00487">
    <property type="entry name" value="DEXDc"/>
    <property type="match status" value="1"/>
</dbReference>
<dbReference type="SMART" id="SM00490">
    <property type="entry name" value="HELICc"/>
    <property type="match status" value="1"/>
</dbReference>
<dbReference type="SUPFAM" id="SSF46600">
    <property type="entry name" value="C-terminal UvrC-binding domain of UvrB"/>
    <property type="match status" value="1"/>
</dbReference>
<dbReference type="SUPFAM" id="SSF52540">
    <property type="entry name" value="P-loop containing nucleoside triphosphate hydrolases"/>
    <property type="match status" value="2"/>
</dbReference>
<dbReference type="PROSITE" id="PS51192">
    <property type="entry name" value="HELICASE_ATP_BIND_1"/>
    <property type="match status" value="1"/>
</dbReference>
<dbReference type="PROSITE" id="PS51194">
    <property type="entry name" value="HELICASE_CTER"/>
    <property type="match status" value="1"/>
</dbReference>
<dbReference type="PROSITE" id="PS50151">
    <property type="entry name" value="UVR"/>
    <property type="match status" value="1"/>
</dbReference>
<proteinExistence type="inferred from homology"/>
<accession>Q99ZA5</accession>
<accession>Q48Y79</accession>
<protein>
    <recommendedName>
        <fullName evidence="1">UvrABC system protein B</fullName>
        <shortName evidence="1">Protein UvrB</shortName>
    </recommendedName>
    <alternativeName>
        <fullName evidence="1">Excinuclease ABC subunit B</fullName>
    </alternativeName>
</protein>
<evidence type="ECO:0000255" key="1">
    <source>
        <dbReference type="HAMAP-Rule" id="MF_00204"/>
    </source>
</evidence>
<evidence type="ECO:0000256" key="2">
    <source>
        <dbReference type="SAM" id="MobiDB-lite"/>
    </source>
</evidence>
<feature type="chain" id="PRO_0000138434" description="UvrABC system protein B">
    <location>
        <begin position="1"/>
        <end position="663"/>
    </location>
</feature>
<feature type="domain" description="Helicase ATP-binding" evidence="1">
    <location>
        <begin position="31"/>
        <end position="418"/>
    </location>
</feature>
<feature type="domain" description="Helicase C-terminal" evidence="1">
    <location>
        <begin position="435"/>
        <end position="601"/>
    </location>
</feature>
<feature type="domain" description="UVR" evidence="1">
    <location>
        <begin position="627"/>
        <end position="662"/>
    </location>
</feature>
<feature type="region of interest" description="Disordered" evidence="2">
    <location>
        <begin position="1"/>
        <end position="23"/>
    </location>
</feature>
<feature type="short sequence motif" description="Beta-hairpin">
    <location>
        <begin position="97"/>
        <end position="120"/>
    </location>
</feature>
<feature type="compositionally biased region" description="Basic and acidic residues" evidence="2">
    <location>
        <begin position="1"/>
        <end position="10"/>
    </location>
</feature>
<feature type="binding site" evidence="1">
    <location>
        <begin position="44"/>
        <end position="51"/>
    </location>
    <ligand>
        <name>ATP</name>
        <dbReference type="ChEBI" id="CHEBI:30616"/>
    </ligand>
</feature>
<name>UVRB_STRP1</name>
<sequence>MIDKRDDKPFKLKSKYKPSGDQPQAIESLVDNIEGGEKAQILLGATGTGKTYTMSQVISKVNKPTLVIAHNKTLAGQLYGEFKEFFPDNAVEYFVSYYDYYQPEAYVPSSDTYIEKDSSVNDEIDKLRHSATSSLLERNDVIVVASVSCIYGLGSPKEYADSAVSLRPGQEISRDTLLNQLVDIQFERNDIDFQRGCFRVRGDVVEVFPASRDEHAFRVEFFGDEIDRICEIESLTGKTIGEVDHLVLFPATHFVTNDEHMEQSIAKIQAELAEQLQLFESEGKLLEAQRLRQRTEYDIEMLREMGYTSGVENYSRHMDGRSPGEPPYTLLDFFPEDFLIMIDESHMTMGQIKGMYNGDQARKQMLVDYGFRLPSALDNRPLRREEFESHVHQIVYVSATPGEYEMSQTNTIIEQIIRPTGLLDPEIDVRSSMGQMDDLLGEINQRVARDERTFITTLTKKMAEDLTDYLKEMGVKVKYMHSDIKTLERTEIIRDLRLGVFDVLIGINLLREGIDVPEVSLVAILDADKEGFLRNERGLIQTIGRAARNVDGHVIMYADKMTDSMQRAIDETARRREIQIAYNKAHGIVPQTIKKDIRGLISISKTSHNDISKEEMDYESMSRGERKEAINALQKQMQEAAELLDFELAAQMRDLILELKLMD</sequence>
<gene>
    <name evidence="1" type="primary">uvrB</name>
    <name type="ordered locus">SPy_1314</name>
    <name type="ordered locus">M5005_Spy1075</name>
</gene>
<comment type="function">
    <text evidence="1">The UvrABC repair system catalyzes the recognition and processing of DNA lesions. A damage recognition complex composed of 2 UvrA and 2 UvrB subunits scans DNA for abnormalities. Upon binding of the UvrA(2)B(2) complex to a putative damaged site, the DNA wraps around one UvrB monomer. DNA wrap is dependent on ATP binding by UvrB and probably causes local melting of the DNA helix, facilitating insertion of UvrB beta-hairpin between the DNA strands. Then UvrB probes one DNA strand for the presence of a lesion. If a lesion is found the UvrA subunits dissociate and the UvrB-DNA preincision complex is formed. This complex is subsequently bound by UvrC and the second UvrB is released. If no lesion is found, the DNA wraps around the other UvrB subunit that will check the other stand for damage.</text>
</comment>
<comment type="subunit">
    <text evidence="1">Forms a heterotetramer with UvrA during the search for lesions. Interacts with UvrC in an incision complex.</text>
</comment>
<comment type="subcellular location">
    <subcellularLocation>
        <location evidence="1">Cytoplasm</location>
    </subcellularLocation>
</comment>
<comment type="domain">
    <text evidence="1">The beta-hairpin motif is involved in DNA binding.</text>
</comment>
<comment type="similarity">
    <text evidence="1">Belongs to the UvrB family.</text>
</comment>
<keyword id="KW-0067">ATP-binding</keyword>
<keyword id="KW-0963">Cytoplasm</keyword>
<keyword id="KW-0227">DNA damage</keyword>
<keyword id="KW-0228">DNA excision</keyword>
<keyword id="KW-0234">DNA repair</keyword>
<keyword id="KW-0267">Excision nuclease</keyword>
<keyword id="KW-0547">Nucleotide-binding</keyword>
<keyword id="KW-1185">Reference proteome</keyword>
<keyword id="KW-0742">SOS response</keyword>